<keyword id="KW-1003">Cell membrane</keyword>
<keyword id="KW-0472">Membrane</keyword>
<keyword id="KW-1185">Reference proteome</keyword>
<keyword id="KW-0812">Transmembrane</keyword>
<keyword id="KW-1133">Transmembrane helix</keyword>
<comment type="subcellular location">
    <subcellularLocation>
        <location evidence="2">Cell membrane</location>
        <topology evidence="2">Multi-pass membrane protein</topology>
    </subcellularLocation>
</comment>
<comment type="similarity">
    <text evidence="2">To M.tuberculosis Rv0628c.</text>
</comment>
<comment type="sequence caution" evidence="2">
    <conflict type="frameshift">
        <sequence resource="EMBL-CDS" id="AAK45139"/>
    </conflict>
</comment>
<name>Y874_MYCTO</name>
<proteinExistence type="predicted"/>
<organism>
    <name type="scientific">Mycobacterium tuberculosis (strain CDC 1551 / Oshkosh)</name>
    <dbReference type="NCBI Taxonomy" id="83331"/>
    <lineage>
        <taxon>Bacteria</taxon>
        <taxon>Bacillati</taxon>
        <taxon>Actinomycetota</taxon>
        <taxon>Actinomycetes</taxon>
        <taxon>Mycobacteriales</taxon>
        <taxon>Mycobacteriaceae</taxon>
        <taxon>Mycobacterium</taxon>
        <taxon>Mycobacterium tuberculosis complex</taxon>
    </lineage>
</organism>
<protein>
    <recommendedName>
        <fullName>Uncharacterized protein MT0897</fullName>
    </recommendedName>
</protein>
<reference key="1">
    <citation type="journal article" date="2002" name="J. Bacteriol.">
        <title>Whole-genome comparison of Mycobacterium tuberculosis clinical and laboratory strains.</title>
        <authorList>
            <person name="Fleischmann R.D."/>
            <person name="Alland D."/>
            <person name="Eisen J.A."/>
            <person name="Carpenter L."/>
            <person name="White O."/>
            <person name="Peterson J.D."/>
            <person name="DeBoy R.T."/>
            <person name="Dodson R.J."/>
            <person name="Gwinn M.L."/>
            <person name="Haft D.H."/>
            <person name="Hickey E.K."/>
            <person name="Kolonay J.F."/>
            <person name="Nelson W.C."/>
            <person name="Umayam L.A."/>
            <person name="Ermolaeva M.D."/>
            <person name="Salzberg S.L."/>
            <person name="Delcher A."/>
            <person name="Utterback T.R."/>
            <person name="Weidman J.F."/>
            <person name="Khouri H.M."/>
            <person name="Gill J."/>
            <person name="Mikula A."/>
            <person name="Bishai W."/>
            <person name="Jacobs W.R. Jr."/>
            <person name="Venter J.C."/>
            <person name="Fraser C.M."/>
        </authorList>
    </citation>
    <scope>NUCLEOTIDE SEQUENCE [LARGE SCALE GENOMIC DNA]</scope>
    <source>
        <strain>CDC 1551 / Oshkosh</strain>
    </source>
</reference>
<accession>P9WKR8</accession>
<accession>L0T7Z3</accession>
<accession>P0A5D3</accession>
<accession>Q10536</accession>
<dbReference type="EMBL" id="AE000516">
    <property type="protein sequence ID" value="AAK45139.1"/>
    <property type="status" value="ALT_FRAME"/>
    <property type="molecule type" value="Genomic_DNA"/>
</dbReference>
<dbReference type="PIR" id="G70779">
    <property type="entry name" value="G70779"/>
</dbReference>
<dbReference type="RefSeq" id="WP_003404586.1">
    <property type="nucleotide sequence ID" value="NZ_KK341227.1"/>
</dbReference>
<dbReference type="KEGG" id="mtc:MT0897"/>
<dbReference type="PATRIC" id="fig|83331.31.peg.963"/>
<dbReference type="HOGENOM" id="CLU_055814_0_0_11"/>
<dbReference type="Proteomes" id="UP000001020">
    <property type="component" value="Chromosome"/>
</dbReference>
<dbReference type="GO" id="GO:0005886">
    <property type="term" value="C:plasma membrane"/>
    <property type="evidence" value="ECO:0007669"/>
    <property type="project" value="UniProtKB-SubCell"/>
</dbReference>
<dbReference type="InterPro" id="IPR019494">
    <property type="entry name" value="FIST_C"/>
</dbReference>
<dbReference type="InterPro" id="IPR013702">
    <property type="entry name" value="FIST_domain_N"/>
</dbReference>
<dbReference type="InterPro" id="IPR016741">
    <property type="entry name" value="UCP018953"/>
</dbReference>
<dbReference type="PANTHER" id="PTHR14939">
    <property type="entry name" value="F-BOX ONLY PROTEIN 22"/>
    <property type="match status" value="1"/>
</dbReference>
<dbReference type="PANTHER" id="PTHR14939:SF5">
    <property type="entry name" value="F-BOX ONLY PROTEIN 22"/>
    <property type="match status" value="1"/>
</dbReference>
<dbReference type="Pfam" id="PF08495">
    <property type="entry name" value="FIST"/>
    <property type="match status" value="1"/>
</dbReference>
<dbReference type="Pfam" id="PF10442">
    <property type="entry name" value="FIST_C"/>
    <property type="match status" value="1"/>
</dbReference>
<dbReference type="PIRSF" id="PIRSF018953">
    <property type="entry name" value="UCP018953"/>
    <property type="match status" value="1"/>
</dbReference>
<dbReference type="SMART" id="SM00897">
    <property type="entry name" value="FIST"/>
    <property type="match status" value="1"/>
</dbReference>
<dbReference type="SMART" id="SM01204">
    <property type="entry name" value="FIST_C"/>
    <property type="match status" value="1"/>
</dbReference>
<gene>
    <name type="ordered locus">MT0897</name>
</gene>
<sequence>MRIGVGVCTTPDARQAAVEAAGQARDELAGEAPSLAVLLGSRAHTDRAADVLSAVLQMIDPPALVGCIAQAIVAGRHEIEDEPAVVVWLASGLAAETFQLDFVRTGSGALITGYRFDRTARDLHLLLPDPYTFPSNLLIEHPNTDLPGTAVVGGVVSGGRRRGDTRLFRDHDVLTSGVVGVRLPGMRGVPVVSQGCRPIGYPYIVTGADGILITELGGRPPLQRLREIVEGLSPDERALVSHGLQIGIVVDEHLAAPGQGDFVIRGLLGADPSTGSIEIDEVVQVGATMQFQVRDAAGADKDLRLTVERAAARLPGRAAGALLFTCNGRGRRMFGVADHDASTIEELLGGIPLAGFFAAGEIGPIAGRNALHGFTASMALFVDDME</sequence>
<evidence type="ECO:0000255" key="1"/>
<evidence type="ECO:0000305" key="2"/>
<feature type="chain" id="PRO_0000427606" description="Uncharacterized protein MT0897">
    <location>
        <begin position="1"/>
        <end position="386"/>
    </location>
</feature>
<feature type="transmembrane region" description="Helical" evidence="1">
    <location>
        <begin position="54"/>
        <end position="74"/>
    </location>
</feature>
<feature type="transmembrane region" description="Helical" evidence="1">
    <location>
        <begin position="347"/>
        <end position="367"/>
    </location>
</feature>